<reference key="1">
    <citation type="journal article" date="1993" name="J. Mol. Biol.">
        <title>Expression of the human placental folate receptor transcript is regulated in human tissues. Organization and full nucleotide sequence of the gene.</title>
        <authorList>
            <person name="Page S.T."/>
            <person name="Owen W.C."/>
            <person name="Price K."/>
            <person name="Elwood P.C."/>
        </authorList>
    </citation>
    <scope>NUCLEOTIDE SEQUENCE [GENOMIC DNA]</scope>
    <scope>TISSUE SPECIFICITY</scope>
</reference>
<reference key="2">
    <citation type="journal article" date="1989" name="Biochemistry">
        <title>Homologous membrane folate binding proteins in human placenta: cloning and sequence of a cDNA.</title>
        <authorList>
            <person name="Ratnam M."/>
            <person name="Marquardt H."/>
            <person name="Duhring J.L."/>
            <person name="Freisheim J.H."/>
        </authorList>
    </citation>
    <scope>NUCLEOTIDE SEQUENCE [MRNA]</scope>
    <scope>PARTIAL PROTEIN SEQUENCE</scope>
    <scope>FUNCTION</scope>
    <scope>TISSUE SPECIFICITY</scope>
    <scope>GLYCOSYLATION</scope>
    <scope>SUBCELLULAR LOCATION</scope>
    <source>
        <tissue>Placenta</tissue>
    </source>
</reference>
<reference key="3">
    <citation type="journal article" date="1994" name="J. Biol. Chem.">
        <title>Characterization of the gene encoding a folate-binding protein expressed in human placenta. Identification of promoter activity in a G-rich SP1 site linked with the tandemly repeated GGAAG motif for the ets encoded GA-binding protein.</title>
        <authorList>
            <person name="Sadasivan E."/>
            <person name="Cedeno M.M."/>
            <person name="Rothenberg S.P."/>
        </authorList>
    </citation>
    <scope>NUCLEOTIDE SEQUENCE [GENOMIC DNA]</scope>
    <source>
        <tissue>Placenta</tissue>
    </source>
</reference>
<reference key="4">
    <citation type="submission" date="2005-04" db="EMBL/GenBank/DDBJ databases">
        <authorList>
            <person name="Suzuki Y."/>
            <person name="Sugano S."/>
            <person name="Totoki Y."/>
            <person name="Toyoda A."/>
            <person name="Takeda T."/>
            <person name="Sakaki Y."/>
            <person name="Tanaka A."/>
            <person name="Yokoyama S."/>
        </authorList>
    </citation>
    <scope>NUCLEOTIDE SEQUENCE [LARGE SCALE MRNA]</scope>
    <source>
        <tissue>Cerebellum</tissue>
    </source>
</reference>
<reference key="5">
    <citation type="journal article" date="2004" name="Genome Res.">
        <title>The status, quality, and expansion of the NIH full-length cDNA project: the Mammalian Gene Collection (MGC).</title>
        <authorList>
            <consortium name="The MGC Project Team"/>
        </authorList>
    </citation>
    <scope>NUCLEOTIDE SEQUENCE [LARGE SCALE MRNA]</scope>
    <source>
        <tissue>Pancreas</tissue>
        <tissue>Placenta</tissue>
    </source>
</reference>
<reference key="6">
    <citation type="journal article" date="1989" name="Adv. Enzyme Regul.">
        <title>Folate coenzyme and antifolate transport proteins in normal and neoplastic cells.</title>
        <authorList>
            <person name="Freisheim J.H."/>
            <person name="Price E.M."/>
            <person name="Ratnam M."/>
        </authorList>
    </citation>
    <scope>PROTEIN SEQUENCE OF 68-86; 102-120 AND 173-184</scope>
</reference>
<reference key="7">
    <citation type="journal article" date="1985" name="J. Biol. Chem.">
        <title>Studies of the role of a particulate folate-binding protein in the uptake of 5-methyltetrahydrofolate by cultured human KB cells.</title>
        <authorList>
            <person name="Antony A.C."/>
            <person name="Kane M.A."/>
            <person name="Portillo R.M."/>
            <person name="Elwood P.C."/>
            <person name="Kolhouse J.F."/>
        </authorList>
    </citation>
    <scope>FUNCTION</scope>
    <scope>SUBCELLULAR LOCATION</scope>
</reference>
<reference key="8">
    <citation type="journal article" date="1995" name="Biochemistry">
        <title>Preferred sites of glycosylphosphatidylinositol modification in folate receptors and constraints in the primary structure of the hydrophobic portion of the signal.</title>
        <authorList>
            <person name="Yan W."/>
            <person name="Ratnam M."/>
        </authorList>
    </citation>
    <scope>GPI-ANCHOR AT ASN-230</scope>
</reference>
<reference key="9">
    <citation type="journal article" date="1997" name="Biochemistry">
        <title>Proteolysis of the carboxyl-terminal GPI signal independent of GPI modification as a mechanism for selective protein secretion.</title>
        <authorList>
            <person name="Wang J."/>
            <person name="Shen F."/>
            <person name="Yan W."/>
            <person name="Wu M."/>
            <person name="Ratnam M."/>
        </authorList>
    </citation>
    <scope>PROTEOLYTIC PROCESSING</scope>
</reference>
<reference key="10">
    <citation type="journal article" date="2010" name="Tumor Biol.">
        <title>All-trans retinoic acid is capable of inducing folate receptor beta expression in KG-1 cells.</title>
        <authorList>
            <person name="Xu Y."/>
            <person name="Wang T."/>
            <person name="Tang R."/>
            <person name="Tang S."/>
        </authorList>
    </citation>
    <scope>INDUCTION BY RETINOIC ACID</scope>
</reference>
<reference key="11">
    <citation type="journal article" date="2013" name="Proc. Natl. Acad. Sci. U.S.A.">
        <title>Structures of human folate receptors reveal biological trafficking states and diversity in folate and antifolate recognition.</title>
        <authorList>
            <person name="Wibowo A.S."/>
            <person name="Singh M."/>
            <person name="Reeder K.M."/>
            <person name="Carter J.J."/>
            <person name="Kovach A.R."/>
            <person name="Meng W."/>
            <person name="Ratnam M."/>
            <person name="Zhang F."/>
            <person name="Dann C.E. III"/>
        </authorList>
    </citation>
    <scope>X-RAY CRYSTALLOGRAPHY (1.8 ANGSTROMS) OF 24-228 IN COMPLEXES WITH FOLATE AND THE ANTIFOLATES METHOTREXATE; AMINOPTERIN AND PEMETREXED</scope>
    <scope>FUNCTION</scope>
    <scope>GLYCOSYLATION AT ASN-115 AND ASN-195</scope>
    <scope>DISULFIDE BONDS</scope>
</reference>
<reference key="12">
    <citation type="journal article" date="2006" name="Science">
        <title>The consensus coding sequences of human breast and colorectal cancers.</title>
        <authorList>
            <person name="Sjoeblom T."/>
            <person name="Jones S."/>
            <person name="Wood L.D."/>
            <person name="Parsons D.W."/>
            <person name="Lin J."/>
            <person name="Barber T.D."/>
            <person name="Mandelker D."/>
            <person name="Leary R.J."/>
            <person name="Ptak J."/>
            <person name="Silliman N."/>
            <person name="Szabo S."/>
            <person name="Buckhaults P."/>
            <person name="Farrell C."/>
            <person name="Meeh P."/>
            <person name="Markowitz S.D."/>
            <person name="Willis J."/>
            <person name="Dawson D."/>
            <person name="Willson J.K.V."/>
            <person name="Gazdar A.F."/>
            <person name="Hartigan J."/>
            <person name="Wu L."/>
            <person name="Liu C."/>
            <person name="Parmigiani G."/>
            <person name="Park B.H."/>
            <person name="Bachman K.E."/>
            <person name="Papadopoulos N."/>
            <person name="Vogelstein B."/>
            <person name="Kinzler K.W."/>
            <person name="Velculescu V.E."/>
        </authorList>
    </citation>
    <scope>VARIANT [LARGE SCALE ANALYSIS] ASN-236</scope>
</reference>
<comment type="function">
    <text evidence="3 4 5">Binds to folate and reduced folic acid derivatives and mediates delivery of 5-methyltetrahydrofolate and folate analogs into the interior of cells. Has high affinity for folate and folic acid analogs at neutral pH. Exposure to slightly acidic pH after receptor endocytosis triggers a conformation change that strongly reduces its affinity for folates and mediates their release.</text>
</comment>
<comment type="subcellular location">
    <subcellularLocation>
        <location>Cell membrane</location>
        <topology>Lipid-anchor</topology>
        <topology>GPI-anchor</topology>
    </subcellularLocation>
    <subcellularLocation>
        <location evidence="8">Secreted</location>
    </subcellularLocation>
</comment>
<comment type="tissue specificity">
    <text evidence="4 7">Expressed in placenta and hematopoietic cells. Expression is increased in malignant tissues.</text>
</comment>
<comment type="induction">
    <text evidence="2">Up-regulated by retinoic acid.</text>
</comment>
<comment type="PTM">
    <text evidence="3 4">N-glycosylated.</text>
</comment>
<comment type="similarity">
    <text evidence="8">Belongs to the folate receptor family.</text>
</comment>
<evidence type="ECO:0000269" key="1">
    <source>
    </source>
</evidence>
<evidence type="ECO:0000269" key="2">
    <source>
    </source>
</evidence>
<evidence type="ECO:0000269" key="3">
    <source>
    </source>
</evidence>
<evidence type="ECO:0000269" key="4">
    <source>
    </source>
</evidence>
<evidence type="ECO:0000269" key="5">
    <source>
    </source>
</evidence>
<evidence type="ECO:0000269" key="6">
    <source>
    </source>
</evidence>
<evidence type="ECO:0000269" key="7">
    <source>
    </source>
</evidence>
<evidence type="ECO:0000305" key="8"/>
<evidence type="ECO:0007744" key="9">
    <source>
        <dbReference type="PDB" id="4KMY"/>
    </source>
</evidence>
<evidence type="ECO:0007744" key="10">
    <source>
        <dbReference type="PDB" id="4KMZ"/>
    </source>
</evidence>
<evidence type="ECO:0007744" key="11">
    <source>
        <dbReference type="PDB" id="4KN0"/>
    </source>
</evidence>
<evidence type="ECO:0007744" key="12">
    <source>
        <dbReference type="PDB" id="4KN1"/>
    </source>
</evidence>
<evidence type="ECO:0007744" key="13">
    <source>
        <dbReference type="PDB" id="4KN2"/>
    </source>
</evidence>
<evidence type="ECO:0007829" key="14">
    <source>
        <dbReference type="PDB" id="4KMY"/>
    </source>
</evidence>
<evidence type="ECO:0007829" key="15">
    <source>
        <dbReference type="PDB" id="4KMZ"/>
    </source>
</evidence>
<evidence type="ECO:0007829" key="16">
    <source>
        <dbReference type="PDB" id="4KN0"/>
    </source>
</evidence>
<dbReference type="EMBL" id="X69516">
    <property type="protein sequence ID" value="CAA49267.1"/>
    <property type="molecule type" value="Genomic_DNA"/>
</dbReference>
<dbReference type="EMBL" id="J02876">
    <property type="protein sequence ID" value="AAA35821.1"/>
    <property type="molecule type" value="mRNA"/>
</dbReference>
<dbReference type="EMBL" id="U02714">
    <property type="protein sequence ID" value="AAA17370.1"/>
    <property type="molecule type" value="Genomic_DNA"/>
</dbReference>
<dbReference type="EMBL" id="U02716">
    <property type="protein sequence ID" value="AAA17370.1"/>
    <property type="status" value="JOINED"/>
    <property type="molecule type" value="Genomic_DNA"/>
</dbReference>
<dbReference type="EMBL" id="AK222643">
    <property type="protein sequence ID" value="BAD96363.1"/>
    <property type="molecule type" value="mRNA"/>
</dbReference>
<dbReference type="EMBL" id="BC058036">
    <property type="protein sequence ID" value="AAH58036.1"/>
    <property type="molecule type" value="mRNA"/>
</dbReference>
<dbReference type="EMBL" id="BC027894">
    <property type="protein sequence ID" value="AAH27894.1"/>
    <property type="molecule type" value="mRNA"/>
</dbReference>
<dbReference type="CCDS" id="CCDS8212.1"/>
<dbReference type="PIR" id="A53315">
    <property type="entry name" value="A33417"/>
</dbReference>
<dbReference type="RefSeq" id="NP_000794.3">
    <property type="nucleotide sequence ID" value="NM_000803.5"/>
</dbReference>
<dbReference type="RefSeq" id="NP_001107006.1">
    <property type="nucleotide sequence ID" value="NM_001113534.2"/>
</dbReference>
<dbReference type="RefSeq" id="NP_001107007.1">
    <property type="nucleotide sequence ID" value="NM_001113535.2"/>
</dbReference>
<dbReference type="RefSeq" id="NP_001107008.1">
    <property type="nucleotide sequence ID" value="NM_001113536.2"/>
</dbReference>
<dbReference type="RefSeq" id="XP_047282639.1">
    <property type="nucleotide sequence ID" value="XM_047426683.1"/>
</dbReference>
<dbReference type="RefSeq" id="XP_054224224.1">
    <property type="nucleotide sequence ID" value="XM_054368249.1"/>
</dbReference>
<dbReference type="PDB" id="4KMY">
    <property type="method" value="X-ray"/>
    <property type="resolution" value="1.80 A"/>
    <property type="chains" value="A=24-228"/>
</dbReference>
<dbReference type="PDB" id="4KMZ">
    <property type="method" value="X-ray"/>
    <property type="resolution" value="2.30 A"/>
    <property type="chains" value="A=24-228"/>
</dbReference>
<dbReference type="PDB" id="4KN0">
    <property type="method" value="X-ray"/>
    <property type="resolution" value="2.10 A"/>
    <property type="chains" value="A=24-228"/>
</dbReference>
<dbReference type="PDB" id="4KN1">
    <property type="method" value="X-ray"/>
    <property type="resolution" value="2.30 A"/>
    <property type="chains" value="A=24-228"/>
</dbReference>
<dbReference type="PDB" id="4KN2">
    <property type="method" value="X-ray"/>
    <property type="resolution" value="2.60 A"/>
    <property type="chains" value="A/B/C=24-227"/>
</dbReference>
<dbReference type="PDBsum" id="4KMY"/>
<dbReference type="PDBsum" id="4KMZ"/>
<dbReference type="PDBsum" id="4KN0"/>
<dbReference type="PDBsum" id="4KN1"/>
<dbReference type="PDBsum" id="4KN2"/>
<dbReference type="SMR" id="P14207"/>
<dbReference type="BioGRID" id="108633">
    <property type="interactions" value="3"/>
</dbReference>
<dbReference type="FunCoup" id="P14207">
    <property type="interactions" value="263"/>
</dbReference>
<dbReference type="IntAct" id="P14207">
    <property type="interactions" value="1"/>
</dbReference>
<dbReference type="STRING" id="9606.ENSP00000298223"/>
<dbReference type="BindingDB" id="P14207"/>
<dbReference type="ChEMBL" id="CHEMBL5064"/>
<dbReference type="DrugBank" id="DB00158">
    <property type="generic name" value="Folic acid"/>
</dbReference>
<dbReference type="DrugBank" id="DB00563">
    <property type="generic name" value="Methotrexate"/>
</dbReference>
<dbReference type="DrugBank" id="DB05168">
    <property type="generic name" value="Vintafolide"/>
</dbReference>
<dbReference type="DrugCentral" id="P14207"/>
<dbReference type="GlyCosmos" id="P14207">
    <property type="glycosylation" value="2 sites, No reported glycans"/>
</dbReference>
<dbReference type="GlyGen" id="P14207">
    <property type="glycosylation" value="4 sites"/>
</dbReference>
<dbReference type="iPTMnet" id="P14207"/>
<dbReference type="PhosphoSitePlus" id="P14207"/>
<dbReference type="BioMuta" id="FOLR2"/>
<dbReference type="DMDM" id="116241366"/>
<dbReference type="MassIVE" id="P14207"/>
<dbReference type="PaxDb" id="9606-ENSP00000298223"/>
<dbReference type="PeptideAtlas" id="P14207"/>
<dbReference type="ProteomicsDB" id="53031"/>
<dbReference type="ABCD" id="P14207">
    <property type="antibodies" value="4 sequenced antibodies"/>
</dbReference>
<dbReference type="Antibodypedia" id="30818">
    <property type="antibodies" value="352 antibodies from 32 providers"/>
</dbReference>
<dbReference type="DNASU" id="2350"/>
<dbReference type="Ensembl" id="ENST00000298223.11">
    <property type="protein sequence ID" value="ENSP00000298223.6"/>
    <property type="gene ID" value="ENSG00000165457.15"/>
</dbReference>
<dbReference type="GeneID" id="2350"/>
<dbReference type="KEGG" id="hsa:2350"/>
<dbReference type="MANE-Select" id="ENST00000298223.11">
    <property type="protein sequence ID" value="ENSP00000298223.6"/>
    <property type="RefSeq nucleotide sequence ID" value="NM_000803.5"/>
    <property type="RefSeq protein sequence ID" value="NP_000794.3"/>
</dbReference>
<dbReference type="UCSC" id="uc001ose.5">
    <property type="organism name" value="human"/>
</dbReference>
<dbReference type="AGR" id="HGNC:3793"/>
<dbReference type="CTD" id="2350"/>
<dbReference type="DisGeNET" id="2350"/>
<dbReference type="GeneCards" id="FOLR2"/>
<dbReference type="HGNC" id="HGNC:3793">
    <property type="gene designation" value="FOLR2"/>
</dbReference>
<dbReference type="HPA" id="ENSG00000165457">
    <property type="expression patterns" value="Tissue enhanced (placenta)"/>
</dbReference>
<dbReference type="MIM" id="136425">
    <property type="type" value="gene"/>
</dbReference>
<dbReference type="neXtProt" id="NX_P14207"/>
<dbReference type="OpenTargets" id="ENSG00000165457"/>
<dbReference type="PharmGKB" id="PA28209"/>
<dbReference type="VEuPathDB" id="HostDB:ENSG00000165457"/>
<dbReference type="eggNOG" id="KOG3656">
    <property type="taxonomic scope" value="Eukaryota"/>
</dbReference>
<dbReference type="GeneTree" id="ENSGT00950000183144"/>
<dbReference type="InParanoid" id="P14207"/>
<dbReference type="OMA" id="KDDFTCK"/>
<dbReference type="OrthoDB" id="567542at2759"/>
<dbReference type="PAN-GO" id="P14207">
    <property type="GO annotations" value="5 GO annotations based on evolutionary models"/>
</dbReference>
<dbReference type="PhylomeDB" id="P14207"/>
<dbReference type="TreeFam" id="TF328532"/>
<dbReference type="PathwayCommons" id="P14207"/>
<dbReference type="Reactome" id="R-HSA-163125">
    <property type="pathway name" value="Post-translational modification: synthesis of GPI-anchored proteins"/>
</dbReference>
<dbReference type="Reactome" id="R-HSA-196757">
    <property type="pathway name" value="Metabolism of folate and pterines"/>
</dbReference>
<dbReference type="BioGRID-ORCS" id="2350">
    <property type="hits" value="12 hits in 1153 CRISPR screens"/>
</dbReference>
<dbReference type="ChiTaRS" id="FOLR2">
    <property type="organism name" value="human"/>
</dbReference>
<dbReference type="EvolutionaryTrace" id="P14207"/>
<dbReference type="GeneWiki" id="FOLR2"/>
<dbReference type="GenomeRNAi" id="2350"/>
<dbReference type="Pharos" id="P14207">
    <property type="development level" value="Tchem"/>
</dbReference>
<dbReference type="PRO" id="PR:P14207"/>
<dbReference type="Proteomes" id="UP000005640">
    <property type="component" value="Chromosome 11"/>
</dbReference>
<dbReference type="RNAct" id="P14207">
    <property type="molecule type" value="protein"/>
</dbReference>
<dbReference type="Bgee" id="ENSG00000165457">
    <property type="expression patterns" value="Expressed in gall bladder and 182 other cell types or tissues"/>
</dbReference>
<dbReference type="ExpressionAtlas" id="P14207">
    <property type="expression patterns" value="baseline and differential"/>
</dbReference>
<dbReference type="GO" id="GO:0009986">
    <property type="term" value="C:cell surface"/>
    <property type="evidence" value="ECO:0000314"/>
    <property type="project" value="BHF-UCL"/>
</dbReference>
<dbReference type="GO" id="GO:0009897">
    <property type="term" value="C:external side of plasma membrane"/>
    <property type="evidence" value="ECO:0000314"/>
    <property type="project" value="UniProtKB"/>
</dbReference>
<dbReference type="GO" id="GO:0005576">
    <property type="term" value="C:extracellular region"/>
    <property type="evidence" value="ECO:0000304"/>
    <property type="project" value="Reactome"/>
</dbReference>
<dbReference type="GO" id="GO:0005886">
    <property type="term" value="C:plasma membrane"/>
    <property type="evidence" value="ECO:0000304"/>
    <property type="project" value="Reactome"/>
</dbReference>
<dbReference type="GO" id="GO:0005542">
    <property type="term" value="F:folic acid binding"/>
    <property type="evidence" value="ECO:0000314"/>
    <property type="project" value="UniProtKB"/>
</dbReference>
<dbReference type="GO" id="GO:0061714">
    <property type="term" value="F:folic acid receptor activity"/>
    <property type="evidence" value="ECO:0000314"/>
    <property type="project" value="UniProtKB"/>
</dbReference>
<dbReference type="GO" id="GO:0038023">
    <property type="term" value="F:signaling receptor activity"/>
    <property type="evidence" value="ECO:0000318"/>
    <property type="project" value="GO_Central"/>
</dbReference>
<dbReference type="GO" id="GO:0007155">
    <property type="term" value="P:cell adhesion"/>
    <property type="evidence" value="ECO:0000318"/>
    <property type="project" value="GO_Central"/>
</dbReference>
<dbReference type="GO" id="GO:0015884">
    <property type="term" value="P:folic acid transport"/>
    <property type="evidence" value="ECO:0000314"/>
    <property type="project" value="UniProtKB"/>
</dbReference>
<dbReference type="GO" id="GO:0007342">
    <property type="term" value="P:fusion of sperm to egg plasma membrane involved in single fertilization"/>
    <property type="evidence" value="ECO:0000318"/>
    <property type="project" value="GO_Central"/>
</dbReference>
<dbReference type="GO" id="GO:0006954">
    <property type="term" value="P:inflammatory response"/>
    <property type="evidence" value="ECO:0000303"/>
    <property type="project" value="BHF-UCL"/>
</dbReference>
<dbReference type="GO" id="GO:0008284">
    <property type="term" value="P:positive regulation of cell population proliferation"/>
    <property type="evidence" value="ECO:0000315"/>
    <property type="project" value="BHF-UCL"/>
</dbReference>
<dbReference type="GO" id="GO:0035036">
    <property type="term" value="P:sperm-egg recognition"/>
    <property type="evidence" value="ECO:0000318"/>
    <property type="project" value="GO_Central"/>
</dbReference>
<dbReference type="InterPro" id="IPR004269">
    <property type="entry name" value="Folate_rcpt"/>
</dbReference>
<dbReference type="InterPro" id="IPR018143">
    <property type="entry name" value="Folate_rcpt-like"/>
</dbReference>
<dbReference type="PANTHER" id="PTHR10517">
    <property type="entry name" value="FOLATE RECEPTOR"/>
    <property type="match status" value="1"/>
</dbReference>
<dbReference type="PANTHER" id="PTHR10517:SF8">
    <property type="entry name" value="FOLATE RECEPTOR BETA"/>
    <property type="match status" value="1"/>
</dbReference>
<dbReference type="Pfam" id="PF03024">
    <property type="entry name" value="Folate_rec"/>
    <property type="match status" value="1"/>
</dbReference>
<feature type="signal peptide">
    <location>
        <begin position="1"/>
        <end position="16"/>
    </location>
</feature>
<feature type="chain" id="PRO_0000008806" description="Folate receptor beta">
    <location>
        <begin position="17"/>
        <end position="230"/>
    </location>
</feature>
<feature type="propeptide" id="PRO_0000008807" description="Removed in mature form">
    <location>
        <begin position="231"/>
        <end position="255"/>
    </location>
</feature>
<feature type="binding site" evidence="10">
    <location>
        <position position="97"/>
    </location>
    <ligand>
        <name>folate</name>
        <dbReference type="ChEBI" id="CHEBI:62501"/>
    </ligand>
</feature>
<feature type="binding site" evidence="10">
    <location>
        <position position="101"/>
    </location>
    <ligand>
        <name>folate</name>
        <dbReference type="ChEBI" id="CHEBI:62501"/>
    </ligand>
</feature>
<feature type="binding site" evidence="10">
    <location>
        <begin position="118"/>
        <end position="122"/>
    </location>
    <ligand>
        <name>folate</name>
        <dbReference type="ChEBI" id="CHEBI:62501"/>
    </ligand>
</feature>
<feature type="binding site" evidence="10">
    <location>
        <begin position="151"/>
        <end position="156"/>
    </location>
    <ligand>
        <name>folate</name>
        <dbReference type="ChEBI" id="CHEBI:62501"/>
    </ligand>
</feature>
<feature type="binding site" evidence="10">
    <location>
        <position position="190"/>
    </location>
    <ligand>
        <name>folate</name>
        <dbReference type="ChEBI" id="CHEBI:62501"/>
    </ligand>
</feature>
<feature type="lipid moiety-binding region" description="GPI-anchor amidated asparagine" evidence="6">
    <location>
        <position position="230"/>
    </location>
</feature>
<feature type="glycosylation site" description="N-linked (GlcNAc...) asparagine" evidence="3 11">
    <location>
        <position position="115"/>
    </location>
</feature>
<feature type="glycosylation site" description="N-linked (GlcNAc...) asparagine" evidence="3 10 11 12 13">
    <location>
        <position position="195"/>
    </location>
</feature>
<feature type="disulfide bond" evidence="3 9 10 11 12 13">
    <location>
        <begin position="31"/>
        <end position="59"/>
    </location>
</feature>
<feature type="disulfide bond" evidence="3 9 10 11 12 13">
    <location>
        <begin position="51"/>
        <end position="99"/>
    </location>
</feature>
<feature type="disulfide bond" evidence="3 9 10 11 12 13">
    <location>
        <begin position="60"/>
        <end position="103"/>
    </location>
</feature>
<feature type="disulfide bond" evidence="3 9 10 11 12 13">
    <location>
        <begin position="83"/>
        <end position="169"/>
    </location>
</feature>
<feature type="disulfide bond" evidence="3 9 10 11 12 13">
    <location>
        <begin position="90"/>
        <end position="140"/>
    </location>
</feature>
<feature type="disulfide bond" evidence="3 9 10 11 12 13">
    <location>
        <begin position="129"/>
        <end position="203"/>
    </location>
</feature>
<feature type="disulfide bond" evidence="3 9 10 11 12 13">
    <location>
        <begin position="133"/>
        <end position="183"/>
    </location>
</feature>
<feature type="disulfide bond" evidence="3 9 10 11 12 13">
    <location>
        <begin position="146"/>
        <end position="163"/>
    </location>
</feature>
<feature type="sequence variant" id="VAR_036408" description="In a breast cancer sample; somatic mutation." evidence="1">
    <original>H</original>
    <variation>N</variation>
    <location>
        <position position="236"/>
    </location>
</feature>
<feature type="sequence conflict" description="In Ref. 6; AA sequence." evidence="8" ref="6">
    <original>C</original>
    <variation>V</variation>
    <location>
        <position position="103"/>
    </location>
</feature>
<feature type="sequence conflict" description="In Ref. 6; AA sequence." evidence="8" ref="6">
    <original>IQ</original>
    <variation>VR</variation>
    <location>
        <begin position="111"/>
        <end position="112"/>
    </location>
</feature>
<feature type="sequence conflict" description="In Ref. 6; AA sequence." evidence="8" ref="6">
    <original>N</original>
    <variation>D</variation>
    <location>
        <position position="115"/>
    </location>
</feature>
<feature type="sequence conflict" description="In Ref. 2; AAA35821, 3; AAA17370 and 6; AA sequence." evidence="8" ref="2 3 6">
    <original>S</original>
    <variation>T</variation>
    <location>
        <position position="117"/>
    </location>
</feature>
<feature type="sequence conflict" description="In Ref. 3; AAA17370." evidence="8" ref="3">
    <original>H</original>
    <variation>L</variation>
    <location>
        <position position="141"/>
    </location>
</feature>
<feature type="sequence conflict" description="In Ref. 3; AAA17370." evidence="8" ref="3">
    <original>S</original>
    <variation>R</variation>
    <location>
        <position position="244"/>
    </location>
</feature>
<feature type="helix" evidence="14">
    <location>
        <begin position="24"/>
        <end position="27"/>
    </location>
</feature>
<feature type="strand" evidence="15">
    <location>
        <begin position="33"/>
        <end position="36"/>
    </location>
</feature>
<feature type="helix" evidence="14">
    <location>
        <begin position="49"/>
        <end position="54"/>
    </location>
</feature>
<feature type="strand" evidence="14">
    <location>
        <begin position="57"/>
        <end position="60"/>
    </location>
</feature>
<feature type="helix" evidence="14">
    <location>
        <begin position="62"/>
        <end position="68"/>
    </location>
</feature>
<feature type="strand" evidence="14">
    <location>
        <begin position="74"/>
        <end position="76"/>
    </location>
</feature>
<feature type="turn" evidence="14">
    <location>
        <begin position="80"/>
        <end position="83"/>
    </location>
</feature>
<feature type="helix" evidence="14">
    <location>
        <begin position="88"/>
        <end position="103"/>
    </location>
</feature>
<feature type="helix" evidence="14">
    <location>
        <begin position="108"/>
        <end position="110"/>
    </location>
</feature>
<feature type="strand" evidence="14">
    <location>
        <begin position="111"/>
        <end position="116"/>
    </location>
</feature>
<feature type="strand" evidence="14">
    <location>
        <begin position="119"/>
        <end position="123"/>
    </location>
</feature>
<feature type="strand" evidence="16">
    <location>
        <begin position="126"/>
        <end position="128"/>
    </location>
</feature>
<feature type="helix" evidence="14">
    <location>
        <begin position="130"/>
        <end position="140"/>
    </location>
</feature>
<feature type="strand" evidence="14">
    <location>
        <begin position="144"/>
        <end position="146"/>
    </location>
</feature>
<feature type="strand" evidence="16">
    <location>
        <begin position="150"/>
        <end position="152"/>
    </location>
</feature>
<feature type="helix" evidence="14">
    <location>
        <begin position="172"/>
        <end position="175"/>
    </location>
</feature>
<feature type="helix" evidence="14">
    <location>
        <begin position="179"/>
        <end position="185"/>
    </location>
</feature>
<feature type="turn" evidence="14">
    <location>
        <begin position="186"/>
        <end position="188"/>
    </location>
</feature>
<feature type="strand" evidence="14">
    <location>
        <begin position="189"/>
        <end position="191"/>
    </location>
</feature>
<feature type="strand" evidence="14">
    <location>
        <begin position="200"/>
        <end position="204"/>
    </location>
</feature>
<feature type="helix" evidence="14">
    <location>
        <begin position="216"/>
        <end position="223"/>
    </location>
</feature>
<protein>
    <recommendedName>
        <fullName>Folate receptor beta</fullName>
        <shortName>FR-beta</shortName>
    </recommendedName>
    <alternativeName>
        <fullName>Folate receptor 2</fullName>
    </alternativeName>
    <alternativeName>
        <fullName>Folate receptor, fetal/placental</fullName>
    </alternativeName>
    <alternativeName>
        <fullName>Placental folate-binding protein</fullName>
        <shortName>FBP</shortName>
    </alternativeName>
</protein>
<name>FOLR2_HUMAN</name>
<proteinExistence type="evidence at protein level"/>
<sequence>MVWKWMPLLLLLVCVATMCSAQDRTDLLNVCMDAKHHKTKPGPEDKLHDQCSPWKKNACCTASTSQELHKDTSRLYNFNWDHCGKMEPACKRHFIQDTCLYECSPNLGPWIQQVNQSWRKERFLDVPLCKEDCQRWWEDCHTSHTCKSNWHRGWDWTSGVNKCPAGALCRTFESYFPTPAALCEGLWSHSYKVSNYSRGSGRCIQMWFDSAQGNPNEEVARFYAAAMHVNAGEMLHGTGGLLLSLALMLQLWLLG</sequence>
<accession>P14207</accession>
<accession>Q05CA5</accession>
<accession>Q6GTE8</accession>
<gene>
    <name type="primary">FOLR2</name>
</gene>
<keyword id="KW-0002">3D-structure</keyword>
<keyword id="KW-1003">Cell membrane</keyword>
<keyword id="KW-0903">Direct protein sequencing</keyword>
<keyword id="KW-1015">Disulfide bond</keyword>
<keyword id="KW-0290">Folate-binding</keyword>
<keyword id="KW-0325">Glycoprotein</keyword>
<keyword id="KW-0336">GPI-anchor</keyword>
<keyword id="KW-0449">Lipoprotein</keyword>
<keyword id="KW-0472">Membrane</keyword>
<keyword id="KW-1267">Proteomics identification</keyword>
<keyword id="KW-0675">Receptor</keyword>
<keyword id="KW-1185">Reference proteome</keyword>
<keyword id="KW-0964">Secreted</keyword>
<keyword id="KW-0732">Signal</keyword>
<keyword id="KW-0813">Transport</keyword>
<organism>
    <name type="scientific">Homo sapiens</name>
    <name type="common">Human</name>
    <dbReference type="NCBI Taxonomy" id="9606"/>
    <lineage>
        <taxon>Eukaryota</taxon>
        <taxon>Metazoa</taxon>
        <taxon>Chordata</taxon>
        <taxon>Craniata</taxon>
        <taxon>Vertebrata</taxon>
        <taxon>Euteleostomi</taxon>
        <taxon>Mammalia</taxon>
        <taxon>Eutheria</taxon>
        <taxon>Euarchontoglires</taxon>
        <taxon>Primates</taxon>
        <taxon>Haplorrhini</taxon>
        <taxon>Catarrhini</taxon>
        <taxon>Hominidae</taxon>
        <taxon>Homo</taxon>
    </lineage>
</organism>